<sequence>MSRAPLPLAAHERLIFALDVPSHDQAIAWVDRLGDSVSFYKIGMELLASGEYFHVLDALAKRDKRVFVDLKFFDIPATVAGTIRRLAQWPVSYCTVHGWHAGMLQAAAEANHGDMRLLAVTVLTSMGRPDLVAMGIDREPVDVVVERALAARAAGIDGVIASGQEAGPIRRATGPDFSIVCPGIRPGGPVGDDQQRTVGVAQAFIDGADAIVVGRPIRLASDPAAAADAIQAEIRAALMQNGD</sequence>
<feature type="chain" id="PRO_0000134602" description="Orotidine 5'-phosphate decarboxylase">
    <location>
        <begin position="1"/>
        <end position="243"/>
    </location>
</feature>
<feature type="active site" description="Proton donor" evidence="1">
    <location>
        <position position="71"/>
    </location>
</feature>
<feature type="binding site" evidence="1">
    <location>
        <position position="19"/>
    </location>
    <ligand>
        <name>substrate</name>
    </ligand>
</feature>
<feature type="binding site" evidence="1">
    <location>
        <position position="41"/>
    </location>
    <ligand>
        <name>substrate</name>
    </ligand>
</feature>
<feature type="binding site" evidence="1">
    <location>
        <begin position="69"/>
        <end position="78"/>
    </location>
    <ligand>
        <name>substrate</name>
    </ligand>
</feature>
<feature type="binding site" evidence="1">
    <location>
        <position position="124"/>
    </location>
    <ligand>
        <name>substrate</name>
    </ligand>
</feature>
<feature type="binding site" evidence="1">
    <location>
        <position position="185"/>
    </location>
    <ligand>
        <name>substrate</name>
    </ligand>
</feature>
<feature type="binding site" evidence="1">
    <location>
        <position position="194"/>
    </location>
    <ligand>
        <name>substrate</name>
    </ligand>
</feature>
<feature type="binding site" evidence="1">
    <location>
        <position position="214"/>
    </location>
    <ligand>
        <name>substrate</name>
    </ligand>
</feature>
<feature type="binding site" evidence="1">
    <location>
        <position position="215"/>
    </location>
    <ligand>
        <name>substrate</name>
    </ligand>
</feature>
<comment type="function">
    <text evidence="1">Catalyzes the decarboxylation of orotidine 5'-monophosphate (OMP) to uridine 5'-monophosphate (UMP).</text>
</comment>
<comment type="catalytic activity">
    <reaction evidence="1">
        <text>orotidine 5'-phosphate + H(+) = UMP + CO2</text>
        <dbReference type="Rhea" id="RHEA:11596"/>
        <dbReference type="ChEBI" id="CHEBI:15378"/>
        <dbReference type="ChEBI" id="CHEBI:16526"/>
        <dbReference type="ChEBI" id="CHEBI:57538"/>
        <dbReference type="ChEBI" id="CHEBI:57865"/>
        <dbReference type="EC" id="4.1.1.23"/>
    </reaction>
</comment>
<comment type="pathway">
    <text evidence="1">Pyrimidine metabolism; UMP biosynthesis via de novo pathway; UMP from orotate: step 2/2.</text>
</comment>
<comment type="subunit">
    <text evidence="1">Homodimer.</text>
</comment>
<comment type="similarity">
    <text evidence="1">Belongs to the OMP decarboxylase family. Type 1 subfamily.</text>
</comment>
<evidence type="ECO:0000255" key="1">
    <source>
        <dbReference type="HAMAP-Rule" id="MF_01200"/>
    </source>
</evidence>
<organism>
    <name type="scientific">Xanthomonas axonopodis pv. citri (strain 306)</name>
    <dbReference type="NCBI Taxonomy" id="190486"/>
    <lineage>
        <taxon>Bacteria</taxon>
        <taxon>Pseudomonadati</taxon>
        <taxon>Pseudomonadota</taxon>
        <taxon>Gammaproteobacteria</taxon>
        <taxon>Lysobacterales</taxon>
        <taxon>Lysobacteraceae</taxon>
        <taxon>Xanthomonas</taxon>
    </lineage>
</organism>
<reference key="1">
    <citation type="journal article" date="2002" name="Nature">
        <title>Comparison of the genomes of two Xanthomonas pathogens with differing host specificities.</title>
        <authorList>
            <person name="da Silva A.C.R."/>
            <person name="Ferro J.A."/>
            <person name="Reinach F.C."/>
            <person name="Farah C.S."/>
            <person name="Furlan L.R."/>
            <person name="Quaggio R.B."/>
            <person name="Monteiro-Vitorello C.B."/>
            <person name="Van Sluys M.A."/>
            <person name="Almeida N.F. Jr."/>
            <person name="Alves L.M.C."/>
            <person name="do Amaral A.M."/>
            <person name="Bertolini M.C."/>
            <person name="Camargo L.E.A."/>
            <person name="Camarotte G."/>
            <person name="Cannavan F."/>
            <person name="Cardozo J."/>
            <person name="Chambergo F."/>
            <person name="Ciapina L.P."/>
            <person name="Cicarelli R.M.B."/>
            <person name="Coutinho L.L."/>
            <person name="Cursino-Santos J.R."/>
            <person name="El-Dorry H."/>
            <person name="Faria J.B."/>
            <person name="Ferreira A.J.S."/>
            <person name="Ferreira R.C.C."/>
            <person name="Ferro M.I.T."/>
            <person name="Formighieri E.F."/>
            <person name="Franco M.C."/>
            <person name="Greggio C.C."/>
            <person name="Gruber A."/>
            <person name="Katsuyama A.M."/>
            <person name="Kishi L.T."/>
            <person name="Leite R.P."/>
            <person name="Lemos E.G.M."/>
            <person name="Lemos M.V.F."/>
            <person name="Locali E.C."/>
            <person name="Machado M.A."/>
            <person name="Madeira A.M.B.N."/>
            <person name="Martinez-Rossi N.M."/>
            <person name="Martins E.C."/>
            <person name="Meidanis J."/>
            <person name="Menck C.F.M."/>
            <person name="Miyaki C.Y."/>
            <person name="Moon D.H."/>
            <person name="Moreira L.M."/>
            <person name="Novo M.T.M."/>
            <person name="Okura V.K."/>
            <person name="Oliveira M.C."/>
            <person name="Oliveira V.R."/>
            <person name="Pereira H.A."/>
            <person name="Rossi A."/>
            <person name="Sena J.A.D."/>
            <person name="Silva C."/>
            <person name="de Souza R.F."/>
            <person name="Spinola L.A.F."/>
            <person name="Takita M.A."/>
            <person name="Tamura R.E."/>
            <person name="Teixeira E.C."/>
            <person name="Tezza R.I.D."/>
            <person name="Trindade dos Santos M."/>
            <person name="Truffi D."/>
            <person name="Tsai S.M."/>
            <person name="White F.F."/>
            <person name="Setubal J.C."/>
            <person name="Kitajima J.P."/>
        </authorList>
    </citation>
    <scope>NUCLEOTIDE SEQUENCE [LARGE SCALE GENOMIC DNA]</scope>
    <source>
        <strain>306</strain>
    </source>
</reference>
<accession>Q8PER4</accession>
<gene>
    <name evidence="1" type="primary">pyrF</name>
    <name type="ordered locus">XAC4276</name>
</gene>
<protein>
    <recommendedName>
        <fullName evidence="1">Orotidine 5'-phosphate decarboxylase</fullName>
        <ecNumber evidence="1">4.1.1.23</ecNumber>
    </recommendedName>
    <alternativeName>
        <fullName evidence="1">OMP decarboxylase</fullName>
        <shortName evidence="1">OMPDCase</shortName>
        <shortName evidence="1">OMPdecase</shortName>
    </alternativeName>
</protein>
<proteinExistence type="inferred from homology"/>
<keyword id="KW-0210">Decarboxylase</keyword>
<keyword id="KW-0456">Lyase</keyword>
<keyword id="KW-0665">Pyrimidine biosynthesis</keyword>
<dbReference type="EC" id="4.1.1.23" evidence="1"/>
<dbReference type="EMBL" id="AE008923">
    <property type="protein sequence ID" value="AAM39111.1"/>
    <property type="molecule type" value="Genomic_DNA"/>
</dbReference>
<dbReference type="RefSeq" id="WP_011052864.1">
    <property type="nucleotide sequence ID" value="NC_003919.1"/>
</dbReference>
<dbReference type="SMR" id="Q8PER4"/>
<dbReference type="GeneID" id="66913252"/>
<dbReference type="KEGG" id="xac:XAC4276"/>
<dbReference type="eggNOG" id="COG0284">
    <property type="taxonomic scope" value="Bacteria"/>
</dbReference>
<dbReference type="HOGENOM" id="CLU_067069_1_0_6"/>
<dbReference type="UniPathway" id="UPA00070">
    <property type="reaction ID" value="UER00120"/>
</dbReference>
<dbReference type="Proteomes" id="UP000000576">
    <property type="component" value="Chromosome"/>
</dbReference>
<dbReference type="GO" id="GO:0005829">
    <property type="term" value="C:cytosol"/>
    <property type="evidence" value="ECO:0007669"/>
    <property type="project" value="TreeGrafter"/>
</dbReference>
<dbReference type="GO" id="GO:0004590">
    <property type="term" value="F:orotidine-5'-phosphate decarboxylase activity"/>
    <property type="evidence" value="ECO:0007669"/>
    <property type="project" value="UniProtKB-UniRule"/>
</dbReference>
<dbReference type="GO" id="GO:0006207">
    <property type="term" value="P:'de novo' pyrimidine nucleobase biosynthetic process"/>
    <property type="evidence" value="ECO:0007669"/>
    <property type="project" value="InterPro"/>
</dbReference>
<dbReference type="GO" id="GO:0044205">
    <property type="term" value="P:'de novo' UMP biosynthetic process"/>
    <property type="evidence" value="ECO:0007669"/>
    <property type="project" value="UniProtKB-UniRule"/>
</dbReference>
<dbReference type="CDD" id="cd04725">
    <property type="entry name" value="OMP_decarboxylase_like"/>
    <property type="match status" value="1"/>
</dbReference>
<dbReference type="FunFam" id="3.20.20.70:FF:000235">
    <property type="entry name" value="Orotidine 5'-phosphate decarboxylase"/>
    <property type="match status" value="1"/>
</dbReference>
<dbReference type="Gene3D" id="3.20.20.70">
    <property type="entry name" value="Aldolase class I"/>
    <property type="match status" value="1"/>
</dbReference>
<dbReference type="HAMAP" id="MF_01200_B">
    <property type="entry name" value="OMPdecase_type1_B"/>
    <property type="match status" value="1"/>
</dbReference>
<dbReference type="InterPro" id="IPR013785">
    <property type="entry name" value="Aldolase_TIM"/>
</dbReference>
<dbReference type="InterPro" id="IPR014732">
    <property type="entry name" value="OMPdecase"/>
</dbReference>
<dbReference type="InterPro" id="IPR018089">
    <property type="entry name" value="OMPdecase_AS"/>
</dbReference>
<dbReference type="InterPro" id="IPR047596">
    <property type="entry name" value="OMPdecase_bac"/>
</dbReference>
<dbReference type="InterPro" id="IPR001754">
    <property type="entry name" value="OMPdeCOase_dom"/>
</dbReference>
<dbReference type="InterPro" id="IPR011060">
    <property type="entry name" value="RibuloseP-bd_barrel"/>
</dbReference>
<dbReference type="NCBIfam" id="NF001273">
    <property type="entry name" value="PRK00230.1"/>
    <property type="match status" value="1"/>
</dbReference>
<dbReference type="NCBIfam" id="TIGR01740">
    <property type="entry name" value="pyrF"/>
    <property type="match status" value="1"/>
</dbReference>
<dbReference type="PANTHER" id="PTHR32119">
    <property type="entry name" value="OROTIDINE 5'-PHOSPHATE DECARBOXYLASE"/>
    <property type="match status" value="1"/>
</dbReference>
<dbReference type="PANTHER" id="PTHR32119:SF2">
    <property type="entry name" value="OROTIDINE 5'-PHOSPHATE DECARBOXYLASE"/>
    <property type="match status" value="1"/>
</dbReference>
<dbReference type="Pfam" id="PF00215">
    <property type="entry name" value="OMPdecase"/>
    <property type="match status" value="1"/>
</dbReference>
<dbReference type="SMART" id="SM00934">
    <property type="entry name" value="OMPdecase"/>
    <property type="match status" value="1"/>
</dbReference>
<dbReference type="SUPFAM" id="SSF51366">
    <property type="entry name" value="Ribulose-phoshate binding barrel"/>
    <property type="match status" value="1"/>
</dbReference>
<dbReference type="PROSITE" id="PS00156">
    <property type="entry name" value="OMPDECASE"/>
    <property type="match status" value="1"/>
</dbReference>
<name>PYRF_XANAC</name>